<evidence type="ECO:0000255" key="1">
    <source>
        <dbReference type="HAMAP-Rule" id="MF_00821"/>
    </source>
</evidence>
<accession>Q4ZLR3</accession>
<proteinExistence type="inferred from homology"/>
<sequence>MTDQPNNDAVANEENGPQFSLQRIYVRDLSFEAPKSPAIFRQEWTPTVSLDLNTRQKQLEGDFYEVVLTLSVTVNNGDEVAFIVEVQQAGIFLIKGLDDGAMSHTLGAFCPNILFPYAREAIDNLVVRGSFPALMLAPVNFDALYAQELQRMQEAGETPTVQ</sequence>
<name>SECB_PSEU2</name>
<protein>
    <recommendedName>
        <fullName evidence="1">Protein-export protein SecB</fullName>
    </recommendedName>
</protein>
<feature type="chain" id="PRO_0000055400" description="Protein-export protein SecB">
    <location>
        <begin position="1"/>
        <end position="162"/>
    </location>
</feature>
<gene>
    <name evidence="1" type="primary">secB</name>
    <name type="ordered locus">Psyr_4882</name>
</gene>
<keyword id="KW-0143">Chaperone</keyword>
<keyword id="KW-0963">Cytoplasm</keyword>
<keyword id="KW-0653">Protein transport</keyword>
<keyword id="KW-0811">Translocation</keyword>
<keyword id="KW-0813">Transport</keyword>
<dbReference type="EMBL" id="CP000075">
    <property type="protein sequence ID" value="AAY39909.1"/>
    <property type="molecule type" value="Genomic_DNA"/>
</dbReference>
<dbReference type="RefSeq" id="WP_003372189.1">
    <property type="nucleotide sequence ID" value="NC_007005.1"/>
</dbReference>
<dbReference type="RefSeq" id="YP_237947.1">
    <property type="nucleotide sequence ID" value="NC_007005.1"/>
</dbReference>
<dbReference type="SMR" id="Q4ZLR3"/>
<dbReference type="STRING" id="205918.Psyr_4882"/>
<dbReference type="GeneID" id="77280731"/>
<dbReference type="KEGG" id="psb:Psyr_4882"/>
<dbReference type="PATRIC" id="fig|205918.7.peg.5047"/>
<dbReference type="eggNOG" id="COG1952">
    <property type="taxonomic scope" value="Bacteria"/>
</dbReference>
<dbReference type="HOGENOM" id="CLU_111574_1_0_6"/>
<dbReference type="OrthoDB" id="9795145at2"/>
<dbReference type="Proteomes" id="UP000000426">
    <property type="component" value="Chromosome"/>
</dbReference>
<dbReference type="GO" id="GO:0005737">
    <property type="term" value="C:cytoplasm"/>
    <property type="evidence" value="ECO:0007669"/>
    <property type="project" value="UniProtKB-SubCell"/>
</dbReference>
<dbReference type="GO" id="GO:0051082">
    <property type="term" value="F:unfolded protein binding"/>
    <property type="evidence" value="ECO:0007669"/>
    <property type="project" value="InterPro"/>
</dbReference>
<dbReference type="GO" id="GO:0006457">
    <property type="term" value="P:protein folding"/>
    <property type="evidence" value="ECO:0007669"/>
    <property type="project" value="UniProtKB-UniRule"/>
</dbReference>
<dbReference type="GO" id="GO:0051262">
    <property type="term" value="P:protein tetramerization"/>
    <property type="evidence" value="ECO:0007669"/>
    <property type="project" value="InterPro"/>
</dbReference>
<dbReference type="GO" id="GO:0015031">
    <property type="term" value="P:protein transport"/>
    <property type="evidence" value="ECO:0007669"/>
    <property type="project" value="UniProtKB-UniRule"/>
</dbReference>
<dbReference type="Gene3D" id="3.10.420.10">
    <property type="entry name" value="SecB-like"/>
    <property type="match status" value="1"/>
</dbReference>
<dbReference type="HAMAP" id="MF_00821">
    <property type="entry name" value="SecB"/>
    <property type="match status" value="1"/>
</dbReference>
<dbReference type="InterPro" id="IPR003708">
    <property type="entry name" value="SecB"/>
</dbReference>
<dbReference type="InterPro" id="IPR035958">
    <property type="entry name" value="SecB-like_sf"/>
</dbReference>
<dbReference type="NCBIfam" id="NF004393">
    <property type="entry name" value="PRK05751.1-4"/>
    <property type="match status" value="1"/>
</dbReference>
<dbReference type="NCBIfam" id="TIGR00809">
    <property type="entry name" value="secB"/>
    <property type="match status" value="1"/>
</dbReference>
<dbReference type="PANTHER" id="PTHR36918">
    <property type="match status" value="1"/>
</dbReference>
<dbReference type="PANTHER" id="PTHR36918:SF1">
    <property type="entry name" value="PROTEIN-EXPORT PROTEIN SECB"/>
    <property type="match status" value="1"/>
</dbReference>
<dbReference type="Pfam" id="PF02556">
    <property type="entry name" value="SecB"/>
    <property type="match status" value="1"/>
</dbReference>
<dbReference type="PRINTS" id="PR01594">
    <property type="entry name" value="SECBCHAPRONE"/>
</dbReference>
<dbReference type="SUPFAM" id="SSF54611">
    <property type="entry name" value="SecB-like"/>
    <property type="match status" value="1"/>
</dbReference>
<organism>
    <name type="scientific">Pseudomonas syringae pv. syringae (strain B728a)</name>
    <dbReference type="NCBI Taxonomy" id="205918"/>
    <lineage>
        <taxon>Bacteria</taxon>
        <taxon>Pseudomonadati</taxon>
        <taxon>Pseudomonadota</taxon>
        <taxon>Gammaproteobacteria</taxon>
        <taxon>Pseudomonadales</taxon>
        <taxon>Pseudomonadaceae</taxon>
        <taxon>Pseudomonas</taxon>
        <taxon>Pseudomonas syringae</taxon>
    </lineage>
</organism>
<comment type="function">
    <text evidence="1">One of the proteins required for the normal export of preproteins out of the cell cytoplasm. It is a molecular chaperone that binds to a subset of precursor proteins, maintaining them in a translocation-competent state. It also specifically binds to its receptor SecA.</text>
</comment>
<comment type="subunit">
    <text evidence="1">Homotetramer, a dimer of dimers. One homotetramer interacts with 1 SecA dimer.</text>
</comment>
<comment type="subcellular location">
    <subcellularLocation>
        <location evidence="1">Cytoplasm</location>
    </subcellularLocation>
</comment>
<comment type="similarity">
    <text evidence="1">Belongs to the SecB family.</text>
</comment>
<reference key="1">
    <citation type="journal article" date="2005" name="Proc. Natl. Acad. Sci. U.S.A.">
        <title>Comparison of the complete genome sequences of Pseudomonas syringae pv. syringae B728a and pv. tomato DC3000.</title>
        <authorList>
            <person name="Feil H."/>
            <person name="Feil W.S."/>
            <person name="Chain P."/>
            <person name="Larimer F."/>
            <person name="Dibartolo G."/>
            <person name="Copeland A."/>
            <person name="Lykidis A."/>
            <person name="Trong S."/>
            <person name="Nolan M."/>
            <person name="Goltsman E."/>
            <person name="Thiel J."/>
            <person name="Malfatti S."/>
            <person name="Loper J.E."/>
            <person name="Lapidus A."/>
            <person name="Detter J.C."/>
            <person name="Land M."/>
            <person name="Richardson P.M."/>
            <person name="Kyrpides N.C."/>
            <person name="Ivanova N."/>
            <person name="Lindow S.E."/>
        </authorList>
    </citation>
    <scope>NUCLEOTIDE SEQUENCE [LARGE SCALE GENOMIC DNA]</scope>
    <source>
        <strain>B728a</strain>
    </source>
</reference>